<sequence length="415" mass="45717">MRGANAWAPLCLLLAAATQLSRQQSPERPVFTCGGILTGESGFIGSEGFPGVYPPNSKCTWKITVPEGKVVVLNFRFIDLESDNLCRYDFVDVYNGHANGQRIGRFCGTFRPGALVSSGNKMMVQMISDANTAGNGFMAMFSAAEPNERGDQYCGGLLDRPSGSFKTPNWPDRDYPAGVTCVWHIVAPKNQLIELKFEKFDVERDNYCRYDYVAVFNGGEVNDARRIGKYCGDSPPAPIVSERNELLIQFLSDLSLTADGFIGHYIFRPKKLPTTTEQPVTTTFPVTTGLKPTVALCQQKCRRTGTLEGNYCSSDFVLAGTVITTITRDGSLHATVSIINIYKEGNLAIQQAGKNMSARLTVVCKQCPLLRRGLNYIIMGQVGEDGRGKIMPNSFIMMFKTKNQKLLDALKNKQC</sequence>
<keyword id="KW-0903">Direct protein sequencing</keyword>
<keyword id="KW-1015">Disulfide bond</keyword>
<keyword id="KW-0325">Glycoprotein</keyword>
<keyword id="KW-0358">Heparin-binding</keyword>
<keyword id="KW-1267">Proteomics identification</keyword>
<keyword id="KW-1185">Reference proteome</keyword>
<keyword id="KW-0677">Repeat</keyword>
<keyword id="KW-0964">Secreted</keyword>
<keyword id="KW-0732">Signal</keyword>
<evidence type="ECO:0000250" key="1">
    <source>
        <dbReference type="UniProtKB" id="Q15113"/>
    </source>
</evidence>
<evidence type="ECO:0000255" key="2"/>
<evidence type="ECO:0000255" key="3">
    <source>
        <dbReference type="PROSITE-ProRule" id="PRU00059"/>
    </source>
</evidence>
<evidence type="ECO:0000255" key="4">
    <source>
        <dbReference type="PROSITE-ProRule" id="PRU00295"/>
    </source>
</evidence>
<evidence type="ECO:0000269" key="5">
    <source>
    </source>
</evidence>
<evidence type="ECO:0000269" key="6">
    <source>
    </source>
</evidence>
<evidence type="ECO:0000269" key="7">
    <source>
    </source>
</evidence>
<evidence type="ECO:0000269" key="8">
    <source>
    </source>
</evidence>
<evidence type="ECO:0000305" key="9"/>
<name>PCOC2_HUMAN</name>
<organism>
    <name type="scientific">Homo sapiens</name>
    <name type="common">Human</name>
    <dbReference type="NCBI Taxonomy" id="9606"/>
    <lineage>
        <taxon>Eukaryota</taxon>
        <taxon>Metazoa</taxon>
        <taxon>Chordata</taxon>
        <taxon>Craniata</taxon>
        <taxon>Vertebrata</taxon>
        <taxon>Euteleostomi</taxon>
        <taxon>Mammalia</taxon>
        <taxon>Eutheria</taxon>
        <taxon>Euarchontoglires</taxon>
        <taxon>Primates</taxon>
        <taxon>Haplorrhini</taxon>
        <taxon>Catarrhini</taxon>
        <taxon>Hominidae</taxon>
        <taxon>Homo</taxon>
    </lineage>
</organism>
<reference key="1">
    <citation type="journal article" date="2000" name="Genomics">
        <title>Identification and expression of a novel type I procollagen C-proteinase enhancer protein gene from the glaucoma candidate region on 3q21-q24.</title>
        <authorList>
            <person name="Xu H."/>
            <person name="Acott T.S."/>
            <person name="Wirtz M.K."/>
        </authorList>
    </citation>
    <scope>NUCLEOTIDE SEQUENCE [MRNA]</scope>
    <scope>TISSUE SPECIFICITY</scope>
</reference>
<reference key="2">
    <citation type="journal article" date="2001" name="Osteoarthritis Cartilage">
        <title>Identification and initial characterization of 5000 expressed sequenced tags (ESTs) each from adult human normal and osteoarthritic cartilage cDNA libraries.</title>
        <authorList>
            <person name="Kumar S."/>
            <person name="Connor J.R."/>
            <person name="Dodds R.A."/>
            <person name="Halsey W."/>
            <person name="Van Horn M."/>
            <person name="Mao J."/>
            <person name="Sathe G.M."/>
            <person name="Mui P."/>
            <person name="Agarwal P."/>
            <person name="Badger A.M."/>
            <person name="Lee J.C."/>
            <person name="Gowen M."/>
            <person name="Lark M.W."/>
        </authorList>
    </citation>
    <scope>NUCLEOTIDE SEQUENCE [LARGE SCALE MRNA]</scope>
    <scope>TISSUE SPECIFICITY</scope>
    <source>
        <tissue>Osteoarthritic cartilage</tissue>
    </source>
</reference>
<reference key="3">
    <citation type="journal article" date="2003" name="Genome Res.">
        <title>The secreted protein discovery initiative (SPDI), a large-scale effort to identify novel human secreted and transmembrane proteins: a bioinformatics assessment.</title>
        <authorList>
            <person name="Clark H.F."/>
            <person name="Gurney A.L."/>
            <person name="Abaya E."/>
            <person name="Baker K."/>
            <person name="Baldwin D.T."/>
            <person name="Brush J."/>
            <person name="Chen J."/>
            <person name="Chow B."/>
            <person name="Chui C."/>
            <person name="Crowley C."/>
            <person name="Currell B."/>
            <person name="Deuel B."/>
            <person name="Dowd P."/>
            <person name="Eaton D."/>
            <person name="Foster J.S."/>
            <person name="Grimaldi C."/>
            <person name="Gu Q."/>
            <person name="Hass P.E."/>
            <person name="Heldens S."/>
            <person name="Huang A."/>
            <person name="Kim H.S."/>
            <person name="Klimowski L."/>
            <person name="Jin Y."/>
            <person name="Johnson S."/>
            <person name="Lee J."/>
            <person name="Lewis L."/>
            <person name="Liao D."/>
            <person name="Mark M.R."/>
            <person name="Robbie E."/>
            <person name="Sanchez C."/>
            <person name="Schoenfeld J."/>
            <person name="Seshagiri S."/>
            <person name="Simmons L."/>
            <person name="Singh J."/>
            <person name="Smith V."/>
            <person name="Stinson J."/>
            <person name="Vagts A."/>
            <person name="Vandlen R.L."/>
            <person name="Watanabe C."/>
            <person name="Wieand D."/>
            <person name="Woods K."/>
            <person name="Xie M.-H."/>
            <person name="Yansura D.G."/>
            <person name="Yi S."/>
            <person name="Yu G."/>
            <person name="Yuan J."/>
            <person name="Zhang M."/>
            <person name="Zhang Z."/>
            <person name="Goddard A.D."/>
            <person name="Wood W.I."/>
            <person name="Godowski P.J."/>
            <person name="Gray A.M."/>
        </authorList>
    </citation>
    <scope>NUCLEOTIDE SEQUENCE [LARGE SCALE MRNA]</scope>
</reference>
<reference key="4">
    <citation type="submission" date="2004-06" db="EMBL/GenBank/DDBJ databases">
        <title>Cloning of human full open reading frames in Gateway(TM) system entry vector (pDONR201).</title>
        <authorList>
            <person name="Ebert L."/>
            <person name="Schick M."/>
            <person name="Neubert P."/>
            <person name="Schatten R."/>
            <person name="Henze S."/>
            <person name="Korn B."/>
        </authorList>
    </citation>
    <scope>NUCLEOTIDE SEQUENCE [LARGE SCALE MRNA]</scope>
</reference>
<reference key="5">
    <citation type="journal article" date="2004" name="Nat. Genet.">
        <title>Complete sequencing and characterization of 21,243 full-length human cDNAs.</title>
        <authorList>
            <person name="Ota T."/>
            <person name="Suzuki Y."/>
            <person name="Nishikawa T."/>
            <person name="Otsuki T."/>
            <person name="Sugiyama T."/>
            <person name="Irie R."/>
            <person name="Wakamatsu A."/>
            <person name="Hayashi K."/>
            <person name="Sato H."/>
            <person name="Nagai K."/>
            <person name="Kimura K."/>
            <person name="Makita H."/>
            <person name="Sekine M."/>
            <person name="Obayashi M."/>
            <person name="Nishi T."/>
            <person name="Shibahara T."/>
            <person name="Tanaka T."/>
            <person name="Ishii S."/>
            <person name="Yamamoto J."/>
            <person name="Saito K."/>
            <person name="Kawai Y."/>
            <person name="Isono Y."/>
            <person name="Nakamura Y."/>
            <person name="Nagahari K."/>
            <person name="Murakami K."/>
            <person name="Yasuda T."/>
            <person name="Iwayanagi T."/>
            <person name="Wagatsuma M."/>
            <person name="Shiratori A."/>
            <person name="Sudo H."/>
            <person name="Hosoiri T."/>
            <person name="Kaku Y."/>
            <person name="Kodaira H."/>
            <person name="Kondo H."/>
            <person name="Sugawara M."/>
            <person name="Takahashi M."/>
            <person name="Kanda K."/>
            <person name="Yokoi T."/>
            <person name="Furuya T."/>
            <person name="Kikkawa E."/>
            <person name="Omura Y."/>
            <person name="Abe K."/>
            <person name="Kamihara K."/>
            <person name="Katsuta N."/>
            <person name="Sato K."/>
            <person name="Tanikawa M."/>
            <person name="Yamazaki M."/>
            <person name="Ninomiya K."/>
            <person name="Ishibashi T."/>
            <person name="Yamashita H."/>
            <person name="Murakawa K."/>
            <person name="Fujimori K."/>
            <person name="Tanai H."/>
            <person name="Kimata M."/>
            <person name="Watanabe M."/>
            <person name="Hiraoka S."/>
            <person name="Chiba Y."/>
            <person name="Ishida S."/>
            <person name="Ono Y."/>
            <person name="Takiguchi S."/>
            <person name="Watanabe S."/>
            <person name="Yosida M."/>
            <person name="Hotuta T."/>
            <person name="Kusano J."/>
            <person name="Kanehori K."/>
            <person name="Takahashi-Fujii A."/>
            <person name="Hara H."/>
            <person name="Tanase T.-O."/>
            <person name="Nomura Y."/>
            <person name="Togiya S."/>
            <person name="Komai F."/>
            <person name="Hara R."/>
            <person name="Takeuchi K."/>
            <person name="Arita M."/>
            <person name="Imose N."/>
            <person name="Musashino K."/>
            <person name="Yuuki H."/>
            <person name="Oshima A."/>
            <person name="Sasaki N."/>
            <person name="Aotsuka S."/>
            <person name="Yoshikawa Y."/>
            <person name="Matsunawa H."/>
            <person name="Ichihara T."/>
            <person name="Shiohata N."/>
            <person name="Sano S."/>
            <person name="Moriya S."/>
            <person name="Momiyama H."/>
            <person name="Satoh N."/>
            <person name="Takami S."/>
            <person name="Terashima Y."/>
            <person name="Suzuki O."/>
            <person name="Nakagawa S."/>
            <person name="Senoh A."/>
            <person name="Mizoguchi H."/>
            <person name="Goto Y."/>
            <person name="Shimizu F."/>
            <person name="Wakebe H."/>
            <person name="Hishigaki H."/>
            <person name="Watanabe T."/>
            <person name="Sugiyama A."/>
            <person name="Takemoto M."/>
            <person name="Kawakami B."/>
            <person name="Yamazaki M."/>
            <person name="Watanabe K."/>
            <person name="Kumagai A."/>
            <person name="Itakura S."/>
            <person name="Fukuzumi Y."/>
            <person name="Fujimori Y."/>
            <person name="Komiyama M."/>
            <person name="Tashiro H."/>
            <person name="Tanigami A."/>
            <person name="Fujiwara T."/>
            <person name="Ono T."/>
            <person name="Yamada K."/>
            <person name="Fujii Y."/>
            <person name="Ozaki K."/>
            <person name="Hirao M."/>
            <person name="Ohmori Y."/>
            <person name="Kawabata A."/>
            <person name="Hikiji T."/>
            <person name="Kobatake N."/>
            <person name="Inagaki H."/>
            <person name="Ikema Y."/>
            <person name="Okamoto S."/>
            <person name="Okitani R."/>
            <person name="Kawakami T."/>
            <person name="Noguchi S."/>
            <person name="Itoh T."/>
            <person name="Shigeta K."/>
            <person name="Senba T."/>
            <person name="Matsumura K."/>
            <person name="Nakajima Y."/>
            <person name="Mizuno T."/>
            <person name="Morinaga M."/>
            <person name="Sasaki M."/>
            <person name="Togashi T."/>
            <person name="Oyama M."/>
            <person name="Hata H."/>
            <person name="Watanabe M."/>
            <person name="Komatsu T."/>
            <person name="Mizushima-Sugano J."/>
            <person name="Satoh T."/>
            <person name="Shirai Y."/>
            <person name="Takahashi Y."/>
            <person name="Nakagawa K."/>
            <person name="Okumura K."/>
            <person name="Nagase T."/>
            <person name="Nomura N."/>
            <person name="Kikuchi H."/>
            <person name="Masuho Y."/>
            <person name="Yamashita R."/>
            <person name="Nakai K."/>
            <person name="Yada T."/>
            <person name="Nakamura Y."/>
            <person name="Ohara O."/>
            <person name="Isogai T."/>
            <person name="Sugano S."/>
        </authorList>
    </citation>
    <scope>NUCLEOTIDE SEQUENCE [LARGE SCALE MRNA]</scope>
    <source>
        <tissue>Synovium</tissue>
    </source>
</reference>
<reference key="6">
    <citation type="submission" date="2005-09" db="EMBL/GenBank/DDBJ databases">
        <authorList>
            <person name="Mural R.J."/>
            <person name="Istrail S."/>
            <person name="Sutton G.G."/>
            <person name="Florea L."/>
            <person name="Halpern A.L."/>
            <person name="Mobarry C.M."/>
            <person name="Lippert R."/>
            <person name="Walenz B."/>
            <person name="Shatkay H."/>
            <person name="Dew I."/>
            <person name="Miller J.R."/>
            <person name="Flanigan M.J."/>
            <person name="Edwards N.J."/>
            <person name="Bolanos R."/>
            <person name="Fasulo D."/>
            <person name="Halldorsson B.V."/>
            <person name="Hannenhalli S."/>
            <person name="Turner R."/>
            <person name="Yooseph S."/>
            <person name="Lu F."/>
            <person name="Nusskern D.R."/>
            <person name="Shue B.C."/>
            <person name="Zheng X.H."/>
            <person name="Zhong F."/>
            <person name="Delcher A.L."/>
            <person name="Huson D.H."/>
            <person name="Kravitz S.A."/>
            <person name="Mouchard L."/>
            <person name="Reinert K."/>
            <person name="Remington K.A."/>
            <person name="Clark A.G."/>
            <person name="Waterman M.S."/>
            <person name="Eichler E.E."/>
            <person name="Adams M.D."/>
            <person name="Hunkapiller M.W."/>
            <person name="Myers E.W."/>
            <person name="Venter J.C."/>
        </authorList>
    </citation>
    <scope>NUCLEOTIDE SEQUENCE [LARGE SCALE GENOMIC DNA]</scope>
</reference>
<reference key="7">
    <citation type="journal article" date="2004" name="Protein Sci.">
        <title>Signal peptide prediction based on analysis of experimentally verified cleavage sites.</title>
        <authorList>
            <person name="Zhang Z."/>
            <person name="Henzel W.J."/>
        </authorList>
    </citation>
    <scope>PROTEIN SEQUENCE OF 24-38</scope>
</reference>
<reference key="8">
    <citation type="journal article" date="2002" name="J. Biol. Chem.">
        <title>PCOLCE2 encodes a functional procollagen C-proteinase enhancer (PCPE2) that is a collagen-binding protein differing in distribution of expression and post-translational modification from the previously described PCPE1.</title>
        <authorList>
            <person name="Steiglitz B.M."/>
            <person name="Keene D.R."/>
            <person name="Greenspan D.S."/>
        </authorList>
    </citation>
    <scope>FUNCTION</scope>
    <scope>INTERACTION WITH HEPARIN AND TYPE I OR II COLLAGEN</scope>
    <scope>TISSUE SPECIFICITY</scope>
    <scope>GLYCOSYLATION</scope>
</reference>
<proteinExistence type="evidence at protein level"/>
<protein>
    <recommendedName>
        <fullName>Procollagen C-endopeptidase enhancer 2</fullName>
    </recommendedName>
    <alternativeName>
        <fullName>Procollagen COOH-terminal proteinase enhancer 2</fullName>
        <shortName>PCPE-2</shortName>
        <shortName>Procollagen C-proteinase enhancer 2</shortName>
    </alternativeName>
</protein>
<feature type="signal peptide" evidence="8">
    <location>
        <begin position="1"/>
        <end position="23"/>
    </location>
</feature>
<feature type="chain" id="PRO_0000022020" description="Procollagen C-endopeptidase enhancer 2">
    <location>
        <begin position="24"/>
        <end position="415"/>
    </location>
</feature>
<feature type="domain" description="CUB 1" evidence="3">
    <location>
        <begin position="33"/>
        <end position="144"/>
    </location>
</feature>
<feature type="domain" description="CUB 2" evidence="3">
    <location>
        <begin position="154"/>
        <end position="268"/>
    </location>
</feature>
<feature type="domain" description="NTR" evidence="4">
    <location>
        <begin position="297"/>
        <end position="415"/>
    </location>
</feature>
<feature type="glycosylation site" description="N-linked (GlcNAc...) asparagine" evidence="2">
    <location>
        <position position="355"/>
    </location>
</feature>
<feature type="disulfide bond" evidence="3">
    <location>
        <begin position="33"/>
        <end position="59"/>
    </location>
</feature>
<feature type="disulfide bond" evidence="3">
    <location>
        <begin position="86"/>
        <end position="107"/>
    </location>
</feature>
<feature type="disulfide bond" evidence="3">
    <location>
        <begin position="154"/>
        <end position="181"/>
    </location>
</feature>
<feature type="disulfide bond" evidence="3">
    <location>
        <begin position="208"/>
        <end position="231"/>
    </location>
</feature>
<feature type="disulfide bond" evidence="1">
    <location>
        <begin position="297"/>
        <end position="364"/>
    </location>
</feature>
<feature type="disulfide bond" evidence="1">
    <location>
        <begin position="301"/>
        <end position="367"/>
    </location>
</feature>
<feature type="disulfide bond" evidence="1">
    <location>
        <begin position="312"/>
        <end position="415"/>
    </location>
</feature>
<feature type="sequence variant" id="VAR_051264" description="In dbSNP:rs35692900.">
    <original>V</original>
    <variation>A</variation>
    <location>
        <position position="280"/>
    </location>
</feature>
<feature type="sequence variant" id="VAR_022448" description="In dbSNP:rs17554211.">
    <original>P</original>
    <variation>T</variation>
    <location>
        <position position="292"/>
    </location>
</feature>
<comment type="function">
    <text evidence="7">Binds to the C-terminal propeptide of types I and II procollagens and may enhance the cleavage of that propeptide by BMP1.</text>
</comment>
<comment type="subunit">
    <text evidence="7">Interacts with heparin with high affinity, and type I or II collagen.</text>
</comment>
<comment type="interaction">
    <interactant intactId="EBI-20737478">
        <id>Q9UKZ9</id>
    </interactant>
    <interactant intactId="EBI-1001132">
        <id>O95229</id>
        <label>ZWINT</label>
    </interactant>
    <organismsDiffer>false</organismsDiffer>
    <experiments>2</experiments>
</comment>
<comment type="subcellular location">
    <subcellularLocation>
        <location evidence="9">Secreted</location>
    </subcellularLocation>
</comment>
<comment type="tissue specificity">
    <text evidence="5 6 7">Highly expressed in the heart, trabecular meshwork, pituitary gland, bladder, mammary gland, trachea and placenta and weakly expressed in the brain. Expressed in cartilage.</text>
</comment>
<comment type="PTM">
    <text evidence="7">O-glycosylated; contains sialic acid.</text>
</comment>
<accession>Q9UKZ9</accession>
<accession>B2RCH9</accession>
<accession>D3DNG4</accession>
<accession>Q9BRH3</accession>
<gene>
    <name type="primary">PCOLCE2</name>
    <name type="synonym">PCPE2</name>
    <name type="ORF">UNQ250/PRO287</name>
</gene>
<dbReference type="EMBL" id="AF098269">
    <property type="protein sequence ID" value="AAF04621.1"/>
    <property type="molecule type" value="mRNA"/>
</dbReference>
<dbReference type="EMBL" id="AY035400">
    <property type="protein sequence ID" value="AAK63128.1"/>
    <property type="molecule type" value="mRNA"/>
</dbReference>
<dbReference type="EMBL" id="AY358557">
    <property type="protein sequence ID" value="AAQ88921.1"/>
    <property type="molecule type" value="mRNA"/>
</dbReference>
<dbReference type="EMBL" id="CR536570">
    <property type="protein sequence ID" value="CAG38807.1"/>
    <property type="molecule type" value="mRNA"/>
</dbReference>
<dbReference type="EMBL" id="AK315121">
    <property type="protein sequence ID" value="BAG37576.1"/>
    <property type="molecule type" value="mRNA"/>
</dbReference>
<dbReference type="EMBL" id="CH471052">
    <property type="protein sequence ID" value="EAW78961.1"/>
    <property type="molecule type" value="Genomic_DNA"/>
</dbReference>
<dbReference type="EMBL" id="CH471052">
    <property type="protein sequence ID" value="EAW78962.1"/>
    <property type="molecule type" value="Genomic_DNA"/>
</dbReference>
<dbReference type="CCDS" id="CCDS3127.1"/>
<dbReference type="RefSeq" id="NP_037495.1">
    <property type="nucleotide sequence ID" value="NM_013363.4"/>
</dbReference>
<dbReference type="SMR" id="Q9UKZ9"/>
<dbReference type="BioGRID" id="117746">
    <property type="interactions" value="30"/>
</dbReference>
<dbReference type="FunCoup" id="Q9UKZ9">
    <property type="interactions" value="275"/>
</dbReference>
<dbReference type="IntAct" id="Q9UKZ9">
    <property type="interactions" value="24"/>
</dbReference>
<dbReference type="STRING" id="9606.ENSP00000295992"/>
<dbReference type="GlyCosmos" id="Q9UKZ9">
    <property type="glycosylation" value="2 sites, 2 glycans"/>
</dbReference>
<dbReference type="GlyGen" id="Q9UKZ9">
    <property type="glycosylation" value="2 sites, 2 O-linked glycans (1 site)"/>
</dbReference>
<dbReference type="iPTMnet" id="Q9UKZ9"/>
<dbReference type="PhosphoSitePlus" id="Q9UKZ9"/>
<dbReference type="BioMuta" id="PCOLCE2"/>
<dbReference type="DMDM" id="67470587"/>
<dbReference type="jPOST" id="Q9UKZ9"/>
<dbReference type="MassIVE" id="Q9UKZ9"/>
<dbReference type="PaxDb" id="9606-ENSP00000295992"/>
<dbReference type="PeptideAtlas" id="Q9UKZ9"/>
<dbReference type="ProteomicsDB" id="84920"/>
<dbReference type="Antibodypedia" id="2145">
    <property type="antibodies" value="155 antibodies from 22 providers"/>
</dbReference>
<dbReference type="DNASU" id="26577"/>
<dbReference type="Ensembl" id="ENST00000295992.8">
    <property type="protein sequence ID" value="ENSP00000295992.3"/>
    <property type="gene ID" value="ENSG00000163710.9"/>
</dbReference>
<dbReference type="GeneID" id="26577"/>
<dbReference type="KEGG" id="hsa:26577"/>
<dbReference type="MANE-Select" id="ENST00000295992.8">
    <property type="protein sequence ID" value="ENSP00000295992.3"/>
    <property type="RefSeq nucleotide sequence ID" value="NM_013363.4"/>
    <property type="RefSeq protein sequence ID" value="NP_037495.1"/>
</dbReference>
<dbReference type="UCSC" id="uc003evd.4">
    <property type="organism name" value="human"/>
</dbReference>
<dbReference type="AGR" id="HGNC:8739"/>
<dbReference type="CTD" id="26577"/>
<dbReference type="DisGeNET" id="26577"/>
<dbReference type="GeneCards" id="PCOLCE2"/>
<dbReference type="HGNC" id="HGNC:8739">
    <property type="gene designation" value="PCOLCE2"/>
</dbReference>
<dbReference type="HPA" id="ENSG00000163710">
    <property type="expression patterns" value="Tissue enhanced (adipose tissue, heart muscle)"/>
</dbReference>
<dbReference type="MIM" id="607064">
    <property type="type" value="gene"/>
</dbReference>
<dbReference type="neXtProt" id="NX_Q9UKZ9"/>
<dbReference type="OpenTargets" id="ENSG00000163710"/>
<dbReference type="PharmGKB" id="PA33084"/>
<dbReference type="VEuPathDB" id="HostDB:ENSG00000163710"/>
<dbReference type="eggNOG" id="ENOG502QRMG">
    <property type="taxonomic scope" value="Eukaryota"/>
</dbReference>
<dbReference type="GeneTree" id="ENSGT00940000157649"/>
<dbReference type="HOGENOM" id="CLU_034096_0_0_1"/>
<dbReference type="InParanoid" id="Q9UKZ9"/>
<dbReference type="OMA" id="DVYNGHV"/>
<dbReference type="OrthoDB" id="6116165at2759"/>
<dbReference type="PAN-GO" id="Q9UKZ9">
    <property type="GO annotations" value="2 GO annotations based on evolutionary models"/>
</dbReference>
<dbReference type="PhylomeDB" id="Q9UKZ9"/>
<dbReference type="TreeFam" id="TF316506"/>
<dbReference type="PathwayCommons" id="Q9UKZ9"/>
<dbReference type="Reactome" id="R-HSA-1650814">
    <property type="pathway name" value="Collagen biosynthesis and modifying enzymes"/>
</dbReference>
<dbReference type="SignaLink" id="Q9UKZ9"/>
<dbReference type="BioGRID-ORCS" id="26577">
    <property type="hits" value="10 hits in 1145 CRISPR screens"/>
</dbReference>
<dbReference type="ChiTaRS" id="PCOLCE2">
    <property type="organism name" value="human"/>
</dbReference>
<dbReference type="GeneWiki" id="PCOLCE2"/>
<dbReference type="GenomeRNAi" id="26577"/>
<dbReference type="Pharos" id="Q9UKZ9">
    <property type="development level" value="Tbio"/>
</dbReference>
<dbReference type="PRO" id="PR:Q9UKZ9"/>
<dbReference type="Proteomes" id="UP000005640">
    <property type="component" value="Chromosome 3"/>
</dbReference>
<dbReference type="RNAct" id="Q9UKZ9">
    <property type="molecule type" value="protein"/>
</dbReference>
<dbReference type="Bgee" id="ENSG00000163710">
    <property type="expression patterns" value="Expressed in calcaneal tendon and 173 other cell types or tissues"/>
</dbReference>
<dbReference type="ExpressionAtlas" id="Q9UKZ9">
    <property type="expression patterns" value="baseline and differential"/>
</dbReference>
<dbReference type="GO" id="GO:0005576">
    <property type="term" value="C:extracellular region"/>
    <property type="evidence" value="ECO:0007669"/>
    <property type="project" value="UniProtKB-SubCell"/>
</dbReference>
<dbReference type="GO" id="GO:0005518">
    <property type="term" value="F:collagen binding"/>
    <property type="evidence" value="ECO:0000314"/>
    <property type="project" value="MGI"/>
</dbReference>
<dbReference type="GO" id="GO:0008201">
    <property type="term" value="F:heparin binding"/>
    <property type="evidence" value="ECO:0000314"/>
    <property type="project" value="MGI"/>
</dbReference>
<dbReference type="GO" id="GO:0016504">
    <property type="term" value="F:peptidase activator activity"/>
    <property type="evidence" value="ECO:0000314"/>
    <property type="project" value="MGI"/>
</dbReference>
<dbReference type="GO" id="GO:1990830">
    <property type="term" value="P:cellular response to leukemia inhibitory factor"/>
    <property type="evidence" value="ECO:0007669"/>
    <property type="project" value="Ensembl"/>
</dbReference>
<dbReference type="CDD" id="cd00041">
    <property type="entry name" value="CUB"/>
    <property type="match status" value="2"/>
</dbReference>
<dbReference type="CDD" id="cd03576">
    <property type="entry name" value="NTR_PCOLCE"/>
    <property type="match status" value="1"/>
</dbReference>
<dbReference type="FunFam" id="2.60.120.290:FF:000005">
    <property type="entry name" value="Procollagen C-endopeptidase enhancer 1"/>
    <property type="match status" value="1"/>
</dbReference>
<dbReference type="FunFam" id="2.40.50.120:FF:000015">
    <property type="entry name" value="Procollagen C-endopeptidase enhancer 2"/>
    <property type="match status" value="1"/>
</dbReference>
<dbReference type="FunFam" id="2.60.120.290:FF:000026">
    <property type="entry name" value="Procollagen C-endopeptidase enhancer 2"/>
    <property type="match status" value="1"/>
</dbReference>
<dbReference type="Gene3D" id="2.40.50.120">
    <property type="match status" value="1"/>
</dbReference>
<dbReference type="Gene3D" id="2.60.120.290">
    <property type="entry name" value="Spermadhesin, CUB domain"/>
    <property type="match status" value="2"/>
</dbReference>
<dbReference type="InterPro" id="IPR000859">
    <property type="entry name" value="CUB_dom"/>
</dbReference>
<dbReference type="InterPro" id="IPR001134">
    <property type="entry name" value="Netrin_domain"/>
</dbReference>
<dbReference type="InterPro" id="IPR018933">
    <property type="entry name" value="Netrin_module_non-TIMP"/>
</dbReference>
<dbReference type="InterPro" id="IPR035814">
    <property type="entry name" value="NTR_PCOLCE"/>
</dbReference>
<dbReference type="InterPro" id="IPR035914">
    <property type="entry name" value="Sperma_CUB_dom_sf"/>
</dbReference>
<dbReference type="InterPro" id="IPR008993">
    <property type="entry name" value="TIMP-like_OB-fold"/>
</dbReference>
<dbReference type="PANTHER" id="PTHR24251">
    <property type="entry name" value="OVOCHYMASE-RELATED"/>
    <property type="match status" value="1"/>
</dbReference>
<dbReference type="PANTHER" id="PTHR24251:SF31">
    <property type="entry name" value="PROCOLLAGEN C-ENDOPEPTIDASE ENHANCER 2"/>
    <property type="match status" value="1"/>
</dbReference>
<dbReference type="Pfam" id="PF00431">
    <property type="entry name" value="CUB"/>
    <property type="match status" value="2"/>
</dbReference>
<dbReference type="Pfam" id="PF01759">
    <property type="entry name" value="NTR"/>
    <property type="match status" value="1"/>
</dbReference>
<dbReference type="SMART" id="SM00643">
    <property type="entry name" value="C345C"/>
    <property type="match status" value="1"/>
</dbReference>
<dbReference type="SMART" id="SM00042">
    <property type="entry name" value="CUB"/>
    <property type="match status" value="2"/>
</dbReference>
<dbReference type="SUPFAM" id="SSF49854">
    <property type="entry name" value="Spermadhesin, CUB domain"/>
    <property type="match status" value="2"/>
</dbReference>
<dbReference type="SUPFAM" id="SSF50242">
    <property type="entry name" value="TIMP-like"/>
    <property type="match status" value="1"/>
</dbReference>
<dbReference type="PROSITE" id="PS01180">
    <property type="entry name" value="CUB"/>
    <property type="match status" value="2"/>
</dbReference>
<dbReference type="PROSITE" id="PS50189">
    <property type="entry name" value="NTR"/>
    <property type="match status" value="1"/>
</dbReference>